<dbReference type="EC" id="2.7.4.6" evidence="1"/>
<dbReference type="EMBL" id="CP000305">
    <property type="protein sequence ID" value="ABG17585.1"/>
    <property type="molecule type" value="Genomic_DNA"/>
</dbReference>
<dbReference type="EMBL" id="ACNQ01000008">
    <property type="protein sequence ID" value="EEO77698.1"/>
    <property type="molecule type" value="Genomic_DNA"/>
</dbReference>
<dbReference type="RefSeq" id="WP_002209821.1">
    <property type="nucleotide sequence ID" value="NZ_ACNQ01000008.1"/>
</dbReference>
<dbReference type="SMR" id="Q1CK95"/>
<dbReference type="GeneID" id="57975841"/>
<dbReference type="KEGG" id="ypn:YPN_1255"/>
<dbReference type="HOGENOM" id="CLU_060216_8_1_6"/>
<dbReference type="Proteomes" id="UP000008936">
    <property type="component" value="Chromosome"/>
</dbReference>
<dbReference type="GO" id="GO:0005737">
    <property type="term" value="C:cytoplasm"/>
    <property type="evidence" value="ECO:0007669"/>
    <property type="project" value="UniProtKB-SubCell"/>
</dbReference>
<dbReference type="GO" id="GO:0005524">
    <property type="term" value="F:ATP binding"/>
    <property type="evidence" value="ECO:0007669"/>
    <property type="project" value="UniProtKB-UniRule"/>
</dbReference>
<dbReference type="GO" id="GO:0046872">
    <property type="term" value="F:metal ion binding"/>
    <property type="evidence" value="ECO:0007669"/>
    <property type="project" value="UniProtKB-KW"/>
</dbReference>
<dbReference type="GO" id="GO:0004550">
    <property type="term" value="F:nucleoside diphosphate kinase activity"/>
    <property type="evidence" value="ECO:0007669"/>
    <property type="project" value="UniProtKB-UniRule"/>
</dbReference>
<dbReference type="GO" id="GO:0006241">
    <property type="term" value="P:CTP biosynthetic process"/>
    <property type="evidence" value="ECO:0007669"/>
    <property type="project" value="UniProtKB-UniRule"/>
</dbReference>
<dbReference type="GO" id="GO:0006183">
    <property type="term" value="P:GTP biosynthetic process"/>
    <property type="evidence" value="ECO:0007669"/>
    <property type="project" value="UniProtKB-UniRule"/>
</dbReference>
<dbReference type="GO" id="GO:0006228">
    <property type="term" value="P:UTP biosynthetic process"/>
    <property type="evidence" value="ECO:0007669"/>
    <property type="project" value="UniProtKB-UniRule"/>
</dbReference>
<dbReference type="CDD" id="cd04413">
    <property type="entry name" value="NDPk_I"/>
    <property type="match status" value="1"/>
</dbReference>
<dbReference type="FunFam" id="3.30.70.141:FF:000001">
    <property type="entry name" value="Nucleoside diphosphate kinase"/>
    <property type="match status" value="1"/>
</dbReference>
<dbReference type="Gene3D" id="3.30.70.141">
    <property type="entry name" value="Nucleoside diphosphate kinase-like domain"/>
    <property type="match status" value="1"/>
</dbReference>
<dbReference type="HAMAP" id="MF_00451">
    <property type="entry name" value="NDP_kinase"/>
    <property type="match status" value="1"/>
</dbReference>
<dbReference type="InterPro" id="IPR034907">
    <property type="entry name" value="NDK-like_dom"/>
</dbReference>
<dbReference type="InterPro" id="IPR036850">
    <property type="entry name" value="NDK-like_dom_sf"/>
</dbReference>
<dbReference type="InterPro" id="IPR001564">
    <property type="entry name" value="Nucleoside_diP_kinase"/>
</dbReference>
<dbReference type="InterPro" id="IPR023005">
    <property type="entry name" value="Nucleoside_diP_kinase_AS"/>
</dbReference>
<dbReference type="NCBIfam" id="NF001908">
    <property type="entry name" value="PRK00668.1"/>
    <property type="match status" value="1"/>
</dbReference>
<dbReference type="PANTHER" id="PTHR46161">
    <property type="entry name" value="NUCLEOSIDE DIPHOSPHATE KINASE"/>
    <property type="match status" value="1"/>
</dbReference>
<dbReference type="PANTHER" id="PTHR46161:SF3">
    <property type="entry name" value="NUCLEOSIDE DIPHOSPHATE KINASE DDB_G0292928-RELATED"/>
    <property type="match status" value="1"/>
</dbReference>
<dbReference type="Pfam" id="PF00334">
    <property type="entry name" value="NDK"/>
    <property type="match status" value="1"/>
</dbReference>
<dbReference type="PRINTS" id="PR01243">
    <property type="entry name" value="NUCDPKINASE"/>
</dbReference>
<dbReference type="SMART" id="SM00562">
    <property type="entry name" value="NDK"/>
    <property type="match status" value="1"/>
</dbReference>
<dbReference type="SUPFAM" id="SSF54919">
    <property type="entry name" value="Nucleoside diphosphate kinase, NDK"/>
    <property type="match status" value="1"/>
</dbReference>
<dbReference type="PROSITE" id="PS00469">
    <property type="entry name" value="NDPK"/>
    <property type="match status" value="1"/>
</dbReference>
<dbReference type="PROSITE" id="PS51374">
    <property type="entry name" value="NDPK_LIKE"/>
    <property type="match status" value="1"/>
</dbReference>
<keyword id="KW-0067">ATP-binding</keyword>
<keyword id="KW-0963">Cytoplasm</keyword>
<keyword id="KW-0418">Kinase</keyword>
<keyword id="KW-0460">Magnesium</keyword>
<keyword id="KW-0479">Metal-binding</keyword>
<keyword id="KW-0546">Nucleotide metabolism</keyword>
<keyword id="KW-0547">Nucleotide-binding</keyword>
<keyword id="KW-0597">Phosphoprotein</keyword>
<keyword id="KW-0808">Transferase</keyword>
<organism>
    <name type="scientific">Yersinia pestis bv. Antiqua (strain Nepal516)</name>
    <dbReference type="NCBI Taxonomy" id="377628"/>
    <lineage>
        <taxon>Bacteria</taxon>
        <taxon>Pseudomonadati</taxon>
        <taxon>Pseudomonadota</taxon>
        <taxon>Gammaproteobacteria</taxon>
        <taxon>Enterobacterales</taxon>
        <taxon>Yersiniaceae</taxon>
        <taxon>Yersinia</taxon>
    </lineage>
</organism>
<gene>
    <name evidence="1" type="primary">ndk</name>
    <name type="ordered locus">YPN_1255</name>
    <name type="ORF">YP516_1378</name>
</gene>
<protein>
    <recommendedName>
        <fullName evidence="1">Nucleoside diphosphate kinase</fullName>
        <shortName evidence="1">NDK</shortName>
        <shortName evidence="1">NDP kinase</shortName>
        <ecNumber evidence="1">2.7.4.6</ecNumber>
    </recommendedName>
    <alternativeName>
        <fullName evidence="1">Nucleoside-2-P kinase</fullName>
    </alternativeName>
</protein>
<accession>Q1CK95</accession>
<accession>C4GRK7</accession>
<feature type="chain" id="PRO_0000267810" description="Nucleoside diphosphate kinase">
    <location>
        <begin position="1"/>
        <end position="142"/>
    </location>
</feature>
<feature type="active site" description="Pros-phosphohistidine intermediate" evidence="1">
    <location>
        <position position="117"/>
    </location>
</feature>
<feature type="binding site" evidence="1">
    <location>
        <position position="11"/>
    </location>
    <ligand>
        <name>ATP</name>
        <dbReference type="ChEBI" id="CHEBI:30616"/>
    </ligand>
</feature>
<feature type="binding site" evidence="1">
    <location>
        <position position="59"/>
    </location>
    <ligand>
        <name>ATP</name>
        <dbReference type="ChEBI" id="CHEBI:30616"/>
    </ligand>
</feature>
<feature type="binding site" evidence="1">
    <location>
        <position position="87"/>
    </location>
    <ligand>
        <name>ATP</name>
        <dbReference type="ChEBI" id="CHEBI:30616"/>
    </ligand>
</feature>
<feature type="binding site" evidence="1">
    <location>
        <position position="93"/>
    </location>
    <ligand>
        <name>ATP</name>
        <dbReference type="ChEBI" id="CHEBI:30616"/>
    </ligand>
</feature>
<feature type="binding site" evidence="1">
    <location>
        <position position="104"/>
    </location>
    <ligand>
        <name>ATP</name>
        <dbReference type="ChEBI" id="CHEBI:30616"/>
    </ligand>
</feature>
<feature type="binding site" evidence="1">
    <location>
        <position position="114"/>
    </location>
    <ligand>
        <name>ATP</name>
        <dbReference type="ChEBI" id="CHEBI:30616"/>
    </ligand>
</feature>
<proteinExistence type="inferred from homology"/>
<sequence>MALERTFSIIKPNAVANNDIGAIYARFERAGFKIIAAKMLHLTKEQAEGFYAEHKGRPFFDGLVEFMTSGPIMVQVLEGENAVQRHRDIMGATNPDNALAGTLRADFSDSFTANAVHGSDAVESAQREIAYFFAADEIFPRS</sequence>
<evidence type="ECO:0000255" key="1">
    <source>
        <dbReference type="HAMAP-Rule" id="MF_00451"/>
    </source>
</evidence>
<name>NDK_YERPN</name>
<reference key="1">
    <citation type="journal article" date="2006" name="J. Bacteriol.">
        <title>Complete genome sequence of Yersinia pestis strains Antiqua and Nepal516: evidence of gene reduction in an emerging pathogen.</title>
        <authorList>
            <person name="Chain P.S.G."/>
            <person name="Hu P."/>
            <person name="Malfatti S.A."/>
            <person name="Radnedge L."/>
            <person name="Larimer F."/>
            <person name="Vergez L.M."/>
            <person name="Worsham P."/>
            <person name="Chu M.C."/>
            <person name="Andersen G.L."/>
        </authorList>
    </citation>
    <scope>NUCLEOTIDE SEQUENCE [LARGE SCALE GENOMIC DNA]</scope>
    <source>
        <strain>Nepal516</strain>
    </source>
</reference>
<reference key="2">
    <citation type="submission" date="2009-04" db="EMBL/GenBank/DDBJ databases">
        <title>Yersinia pestis Nepal516A whole genome shotgun sequencing project.</title>
        <authorList>
            <person name="Plunkett G. III"/>
            <person name="Anderson B.D."/>
            <person name="Baumler D.J."/>
            <person name="Burland V."/>
            <person name="Cabot E.L."/>
            <person name="Glasner J.D."/>
            <person name="Mau B."/>
            <person name="Neeno-Eckwall E."/>
            <person name="Perna N.T."/>
            <person name="Munk A.C."/>
            <person name="Tapia R."/>
            <person name="Green L.D."/>
            <person name="Rogers Y.C."/>
            <person name="Detter J.C."/>
            <person name="Bruce D.C."/>
            <person name="Brettin T.S."/>
        </authorList>
    </citation>
    <scope>NUCLEOTIDE SEQUENCE [LARGE SCALE GENOMIC DNA]</scope>
    <source>
        <strain>Nepal516</strain>
    </source>
</reference>
<comment type="function">
    <text evidence="1">Major role in the synthesis of nucleoside triphosphates other than ATP. The ATP gamma phosphate is transferred to the NDP beta phosphate via a ping-pong mechanism, using a phosphorylated active-site intermediate.</text>
</comment>
<comment type="catalytic activity">
    <reaction evidence="1">
        <text>a 2'-deoxyribonucleoside 5'-diphosphate + ATP = a 2'-deoxyribonucleoside 5'-triphosphate + ADP</text>
        <dbReference type="Rhea" id="RHEA:44640"/>
        <dbReference type="ChEBI" id="CHEBI:30616"/>
        <dbReference type="ChEBI" id="CHEBI:61560"/>
        <dbReference type="ChEBI" id="CHEBI:73316"/>
        <dbReference type="ChEBI" id="CHEBI:456216"/>
        <dbReference type="EC" id="2.7.4.6"/>
    </reaction>
</comment>
<comment type="catalytic activity">
    <reaction evidence="1">
        <text>a ribonucleoside 5'-diphosphate + ATP = a ribonucleoside 5'-triphosphate + ADP</text>
        <dbReference type="Rhea" id="RHEA:18113"/>
        <dbReference type="ChEBI" id="CHEBI:30616"/>
        <dbReference type="ChEBI" id="CHEBI:57930"/>
        <dbReference type="ChEBI" id="CHEBI:61557"/>
        <dbReference type="ChEBI" id="CHEBI:456216"/>
        <dbReference type="EC" id="2.7.4.6"/>
    </reaction>
</comment>
<comment type="cofactor">
    <cofactor evidence="1">
        <name>Mg(2+)</name>
        <dbReference type="ChEBI" id="CHEBI:18420"/>
    </cofactor>
</comment>
<comment type="subunit">
    <text evidence="1">Homotetramer.</text>
</comment>
<comment type="subcellular location">
    <subcellularLocation>
        <location evidence="1">Cytoplasm</location>
    </subcellularLocation>
</comment>
<comment type="similarity">
    <text evidence="1">Belongs to the NDK family.</text>
</comment>